<accession>A1JL36</accession>
<gene>
    <name type="ordered locus">YE1167</name>
</gene>
<proteinExistence type="inferred from homology"/>
<evidence type="ECO:0000255" key="1">
    <source>
        <dbReference type="HAMAP-Rule" id="MF_00489"/>
    </source>
</evidence>
<sequence>MQIWVDADACPNVIKEVLFRAADRTGMMVTLVANQPLKTPPSKFIRTLQVASGFDVADNEIVQRVEKNDLVITADIPLAAEVIEKGGIALNPRGERYTPDTIRERLNMRDFMDTMRASGIQTGGPNTLNQRDRQQFANELDKWLQQTIKAQV</sequence>
<comment type="similarity">
    <text evidence="1">Belongs to the UPF0178 family.</text>
</comment>
<name>Y1167_YERE8</name>
<feature type="chain" id="PRO_1000014455" description="UPF0178 protein YE1167">
    <location>
        <begin position="1"/>
        <end position="152"/>
    </location>
</feature>
<reference key="1">
    <citation type="journal article" date="2006" name="PLoS Genet.">
        <title>The complete genome sequence and comparative genome analysis of the high pathogenicity Yersinia enterocolitica strain 8081.</title>
        <authorList>
            <person name="Thomson N.R."/>
            <person name="Howard S."/>
            <person name="Wren B.W."/>
            <person name="Holden M.T.G."/>
            <person name="Crossman L."/>
            <person name="Challis G.L."/>
            <person name="Churcher C."/>
            <person name="Mungall K."/>
            <person name="Brooks K."/>
            <person name="Chillingworth T."/>
            <person name="Feltwell T."/>
            <person name="Abdellah Z."/>
            <person name="Hauser H."/>
            <person name="Jagels K."/>
            <person name="Maddison M."/>
            <person name="Moule S."/>
            <person name="Sanders M."/>
            <person name="Whitehead S."/>
            <person name="Quail M.A."/>
            <person name="Dougan G."/>
            <person name="Parkhill J."/>
            <person name="Prentice M.B."/>
        </authorList>
    </citation>
    <scope>NUCLEOTIDE SEQUENCE [LARGE SCALE GENOMIC DNA]</scope>
    <source>
        <strain>NCTC 13174 / 8081</strain>
    </source>
</reference>
<dbReference type="EMBL" id="AM286415">
    <property type="protein sequence ID" value="CAL11260.1"/>
    <property type="molecule type" value="Genomic_DNA"/>
</dbReference>
<dbReference type="RefSeq" id="WP_011815835.1">
    <property type="nucleotide sequence ID" value="NC_008800.1"/>
</dbReference>
<dbReference type="RefSeq" id="YP_001005493.1">
    <property type="nucleotide sequence ID" value="NC_008800.1"/>
</dbReference>
<dbReference type="KEGG" id="yen:YE1167"/>
<dbReference type="PATRIC" id="fig|393305.7.peg.1272"/>
<dbReference type="eggNOG" id="COG1671">
    <property type="taxonomic scope" value="Bacteria"/>
</dbReference>
<dbReference type="HOGENOM" id="CLU_106619_2_1_6"/>
<dbReference type="OrthoDB" id="9798918at2"/>
<dbReference type="Proteomes" id="UP000000642">
    <property type="component" value="Chromosome"/>
</dbReference>
<dbReference type="CDD" id="cd18720">
    <property type="entry name" value="PIN_YqxD-like"/>
    <property type="match status" value="1"/>
</dbReference>
<dbReference type="HAMAP" id="MF_00489">
    <property type="entry name" value="UPF0178"/>
    <property type="match status" value="1"/>
</dbReference>
<dbReference type="InterPro" id="IPR003791">
    <property type="entry name" value="UPF0178"/>
</dbReference>
<dbReference type="NCBIfam" id="NF001095">
    <property type="entry name" value="PRK00124.1"/>
    <property type="match status" value="1"/>
</dbReference>
<dbReference type="PANTHER" id="PTHR35146">
    <property type="entry name" value="UPF0178 PROTEIN YAII"/>
    <property type="match status" value="1"/>
</dbReference>
<dbReference type="PANTHER" id="PTHR35146:SF1">
    <property type="entry name" value="UPF0178 PROTEIN YAII"/>
    <property type="match status" value="1"/>
</dbReference>
<dbReference type="Pfam" id="PF02639">
    <property type="entry name" value="DUF188"/>
    <property type="match status" value="1"/>
</dbReference>
<organism>
    <name type="scientific">Yersinia enterocolitica serotype O:8 / biotype 1B (strain NCTC 13174 / 8081)</name>
    <dbReference type="NCBI Taxonomy" id="393305"/>
    <lineage>
        <taxon>Bacteria</taxon>
        <taxon>Pseudomonadati</taxon>
        <taxon>Pseudomonadota</taxon>
        <taxon>Gammaproteobacteria</taxon>
        <taxon>Enterobacterales</taxon>
        <taxon>Yersiniaceae</taxon>
        <taxon>Yersinia</taxon>
    </lineage>
</organism>
<protein>
    <recommendedName>
        <fullName evidence="1">UPF0178 protein YE1167</fullName>
    </recommendedName>
</protein>